<organism>
    <name type="scientific">Bacillus subtilis (strain 168)</name>
    <dbReference type="NCBI Taxonomy" id="224308"/>
    <lineage>
        <taxon>Bacteria</taxon>
        <taxon>Bacillati</taxon>
        <taxon>Bacillota</taxon>
        <taxon>Bacilli</taxon>
        <taxon>Bacillales</taxon>
        <taxon>Bacillaceae</taxon>
        <taxon>Bacillus</taxon>
    </lineage>
</organism>
<reference key="1">
    <citation type="journal article" date="1995" name="J. Biol. Chem.">
        <title>OpuA, an osmotically regulated binding protein-dependent transport system for the osmoprotectant glycine betaine in Bacillus subtilis.</title>
        <authorList>
            <person name="Kempf B."/>
            <person name="Bremer E."/>
        </authorList>
    </citation>
    <scope>NUCLEOTIDE SEQUENCE [GENOMIC DNA]</scope>
    <scope>FUNCTION</scope>
    <scope>SUBUNIT</scope>
    <source>
        <strain>168 / JH642</strain>
    </source>
</reference>
<reference key="2">
    <citation type="journal article" date="1996" name="Microbiology">
        <title>The 25 degrees-36 degrees region of the Bacillus subtilis chromosome: determination of the sequence of a 146 kb segment and identification of 113 genes.</title>
        <authorList>
            <person name="Yamane K."/>
            <person name="Kumano M."/>
            <person name="Kurita K."/>
        </authorList>
    </citation>
    <scope>NUCLEOTIDE SEQUENCE [GENOMIC DNA]</scope>
    <source>
        <strain>168</strain>
    </source>
</reference>
<reference key="3">
    <citation type="journal article" date="1997" name="Nature">
        <title>The complete genome sequence of the Gram-positive bacterium Bacillus subtilis.</title>
        <authorList>
            <person name="Kunst F."/>
            <person name="Ogasawara N."/>
            <person name="Moszer I."/>
            <person name="Albertini A.M."/>
            <person name="Alloni G."/>
            <person name="Azevedo V."/>
            <person name="Bertero M.G."/>
            <person name="Bessieres P."/>
            <person name="Bolotin A."/>
            <person name="Borchert S."/>
            <person name="Borriss R."/>
            <person name="Boursier L."/>
            <person name="Brans A."/>
            <person name="Braun M."/>
            <person name="Brignell S.C."/>
            <person name="Bron S."/>
            <person name="Brouillet S."/>
            <person name="Bruschi C.V."/>
            <person name="Caldwell B."/>
            <person name="Capuano V."/>
            <person name="Carter N.M."/>
            <person name="Choi S.-K."/>
            <person name="Codani J.-J."/>
            <person name="Connerton I.F."/>
            <person name="Cummings N.J."/>
            <person name="Daniel R.A."/>
            <person name="Denizot F."/>
            <person name="Devine K.M."/>
            <person name="Duesterhoeft A."/>
            <person name="Ehrlich S.D."/>
            <person name="Emmerson P.T."/>
            <person name="Entian K.-D."/>
            <person name="Errington J."/>
            <person name="Fabret C."/>
            <person name="Ferrari E."/>
            <person name="Foulger D."/>
            <person name="Fritz C."/>
            <person name="Fujita M."/>
            <person name="Fujita Y."/>
            <person name="Fuma S."/>
            <person name="Galizzi A."/>
            <person name="Galleron N."/>
            <person name="Ghim S.-Y."/>
            <person name="Glaser P."/>
            <person name="Goffeau A."/>
            <person name="Golightly E.J."/>
            <person name="Grandi G."/>
            <person name="Guiseppi G."/>
            <person name="Guy B.J."/>
            <person name="Haga K."/>
            <person name="Haiech J."/>
            <person name="Harwood C.R."/>
            <person name="Henaut A."/>
            <person name="Hilbert H."/>
            <person name="Holsappel S."/>
            <person name="Hosono S."/>
            <person name="Hullo M.-F."/>
            <person name="Itaya M."/>
            <person name="Jones L.-M."/>
            <person name="Joris B."/>
            <person name="Karamata D."/>
            <person name="Kasahara Y."/>
            <person name="Klaerr-Blanchard M."/>
            <person name="Klein C."/>
            <person name="Kobayashi Y."/>
            <person name="Koetter P."/>
            <person name="Koningstein G."/>
            <person name="Krogh S."/>
            <person name="Kumano M."/>
            <person name="Kurita K."/>
            <person name="Lapidus A."/>
            <person name="Lardinois S."/>
            <person name="Lauber J."/>
            <person name="Lazarevic V."/>
            <person name="Lee S.-M."/>
            <person name="Levine A."/>
            <person name="Liu H."/>
            <person name="Masuda S."/>
            <person name="Mauel C."/>
            <person name="Medigue C."/>
            <person name="Medina N."/>
            <person name="Mellado R.P."/>
            <person name="Mizuno M."/>
            <person name="Moestl D."/>
            <person name="Nakai S."/>
            <person name="Noback M."/>
            <person name="Noone D."/>
            <person name="O'Reilly M."/>
            <person name="Ogawa K."/>
            <person name="Ogiwara A."/>
            <person name="Oudega B."/>
            <person name="Park S.-H."/>
            <person name="Parro V."/>
            <person name="Pohl T.M."/>
            <person name="Portetelle D."/>
            <person name="Porwollik S."/>
            <person name="Prescott A.M."/>
            <person name="Presecan E."/>
            <person name="Pujic P."/>
            <person name="Purnelle B."/>
            <person name="Rapoport G."/>
            <person name="Rey M."/>
            <person name="Reynolds S."/>
            <person name="Rieger M."/>
            <person name="Rivolta C."/>
            <person name="Rocha E."/>
            <person name="Roche B."/>
            <person name="Rose M."/>
            <person name="Sadaie Y."/>
            <person name="Sato T."/>
            <person name="Scanlan E."/>
            <person name="Schleich S."/>
            <person name="Schroeter R."/>
            <person name="Scoffone F."/>
            <person name="Sekiguchi J."/>
            <person name="Sekowska A."/>
            <person name="Seror S.J."/>
            <person name="Serror P."/>
            <person name="Shin B.-S."/>
            <person name="Soldo B."/>
            <person name="Sorokin A."/>
            <person name="Tacconi E."/>
            <person name="Takagi T."/>
            <person name="Takahashi H."/>
            <person name="Takemaru K."/>
            <person name="Takeuchi M."/>
            <person name="Tamakoshi A."/>
            <person name="Tanaka T."/>
            <person name="Terpstra P."/>
            <person name="Tognoni A."/>
            <person name="Tosato V."/>
            <person name="Uchiyama S."/>
            <person name="Vandenbol M."/>
            <person name="Vannier F."/>
            <person name="Vassarotti A."/>
            <person name="Viari A."/>
            <person name="Wambutt R."/>
            <person name="Wedler E."/>
            <person name="Wedler H."/>
            <person name="Weitzenegger T."/>
            <person name="Winters P."/>
            <person name="Wipat A."/>
            <person name="Yamamoto H."/>
            <person name="Yamane K."/>
            <person name="Yasumoto K."/>
            <person name="Yata K."/>
            <person name="Yoshida K."/>
            <person name="Yoshikawa H.-F."/>
            <person name="Zumstein E."/>
            <person name="Yoshikawa H."/>
            <person name="Danchin A."/>
        </authorList>
    </citation>
    <scope>NUCLEOTIDE SEQUENCE [LARGE SCALE GENOMIC DNA]</scope>
    <source>
        <strain>168</strain>
    </source>
</reference>
<reference key="4">
    <citation type="journal article" date="2009" name="Microbiology">
        <title>From a consortium sequence to a unified sequence: the Bacillus subtilis 168 reference genome a decade later.</title>
        <authorList>
            <person name="Barbe V."/>
            <person name="Cruveiller S."/>
            <person name="Kunst F."/>
            <person name="Lenoble P."/>
            <person name="Meurice G."/>
            <person name="Sekowska A."/>
            <person name="Vallenet D."/>
            <person name="Wang T."/>
            <person name="Moszer I."/>
            <person name="Medigue C."/>
            <person name="Danchin A."/>
        </authorList>
    </citation>
    <scope>SEQUENCE REVISION TO 35</scope>
</reference>
<reference key="5">
    <citation type="journal article" date="1996" name="J. Bacteriol.">
        <title>Three transport systems for the osmoprotectant glycine betaine operate in Bacillus subtilis: characterization of OpuD.</title>
        <authorList>
            <person name="Kappes R."/>
            <person name="Kempf B."/>
            <person name="Bremer E."/>
        </authorList>
    </citation>
    <scope>FUNCTION IN GLYCINE BETAINE TRANSPORT</scope>
    <source>
        <strain>168 / JH642</strain>
    </source>
</reference>
<gene>
    <name type="primary">opuAA</name>
    <name type="ordered locus">BSU02980</name>
</gene>
<evidence type="ECO:0000255" key="1">
    <source>
        <dbReference type="PROSITE-ProRule" id="PRU00434"/>
    </source>
</evidence>
<evidence type="ECO:0000255" key="2">
    <source>
        <dbReference type="PROSITE-ProRule" id="PRU00703"/>
    </source>
</evidence>
<evidence type="ECO:0000269" key="3">
    <source>
    </source>
</evidence>
<evidence type="ECO:0000269" key="4">
    <source>
    </source>
</evidence>
<evidence type="ECO:0000305" key="5"/>
<dbReference type="EC" id="7.6.2.9"/>
<dbReference type="EMBL" id="U17292">
    <property type="protein sequence ID" value="AAC43455.1"/>
    <property type="molecule type" value="Genomic_DNA"/>
</dbReference>
<dbReference type="EMBL" id="D50453">
    <property type="protein sequence ID" value="BAA08932.1"/>
    <property type="molecule type" value="Genomic_DNA"/>
</dbReference>
<dbReference type="EMBL" id="AL009126">
    <property type="protein sequence ID" value="CAB12092.2"/>
    <property type="molecule type" value="Genomic_DNA"/>
</dbReference>
<dbReference type="PIR" id="I40535">
    <property type="entry name" value="I40535"/>
</dbReference>
<dbReference type="RefSeq" id="NP_388180.2">
    <property type="nucleotide sequence ID" value="NC_000964.3"/>
</dbReference>
<dbReference type="RefSeq" id="WP_003246301.1">
    <property type="nucleotide sequence ID" value="NZ_OZ025638.1"/>
</dbReference>
<dbReference type="SMR" id="P46920"/>
<dbReference type="FunCoup" id="P46920">
    <property type="interactions" value="275"/>
</dbReference>
<dbReference type="STRING" id="224308.BSU02980"/>
<dbReference type="TCDB" id="3.A.1.12.2">
    <property type="family name" value="the atp-binding cassette (abc) superfamily"/>
</dbReference>
<dbReference type="PaxDb" id="224308-BSU02980"/>
<dbReference type="EnsemblBacteria" id="CAB12092">
    <property type="protein sequence ID" value="CAB12092"/>
    <property type="gene ID" value="BSU_02980"/>
</dbReference>
<dbReference type="GeneID" id="938362"/>
<dbReference type="KEGG" id="bsu:BSU02980"/>
<dbReference type="PATRIC" id="fig|224308.179.peg.310"/>
<dbReference type="eggNOG" id="COG0517">
    <property type="taxonomic scope" value="Bacteria"/>
</dbReference>
<dbReference type="eggNOG" id="COG4175">
    <property type="taxonomic scope" value="Bacteria"/>
</dbReference>
<dbReference type="InParanoid" id="P46920"/>
<dbReference type="OrthoDB" id="9802264at2"/>
<dbReference type="PhylomeDB" id="P46920"/>
<dbReference type="BioCyc" id="BSUB:BSU02980-MONOMER"/>
<dbReference type="BRENDA" id="7.6.2.9">
    <property type="organism ID" value="658"/>
</dbReference>
<dbReference type="Proteomes" id="UP000001570">
    <property type="component" value="Chromosome"/>
</dbReference>
<dbReference type="GO" id="GO:0016020">
    <property type="term" value="C:membrane"/>
    <property type="evidence" value="ECO:0007669"/>
    <property type="project" value="InterPro"/>
</dbReference>
<dbReference type="GO" id="GO:0015418">
    <property type="term" value="F:ABC-type quaternary ammonium compound transporting activity"/>
    <property type="evidence" value="ECO:0007669"/>
    <property type="project" value="UniProtKB-EC"/>
</dbReference>
<dbReference type="GO" id="GO:0005524">
    <property type="term" value="F:ATP binding"/>
    <property type="evidence" value="ECO:0007669"/>
    <property type="project" value="UniProtKB-KW"/>
</dbReference>
<dbReference type="GO" id="GO:0016887">
    <property type="term" value="F:ATP hydrolysis activity"/>
    <property type="evidence" value="ECO:0007669"/>
    <property type="project" value="InterPro"/>
</dbReference>
<dbReference type="GO" id="GO:0006865">
    <property type="term" value="P:amino acid transport"/>
    <property type="evidence" value="ECO:0007669"/>
    <property type="project" value="UniProtKB-KW"/>
</dbReference>
<dbReference type="GO" id="GO:0031460">
    <property type="term" value="P:glycine betaine transport"/>
    <property type="evidence" value="ECO:0007669"/>
    <property type="project" value="InterPro"/>
</dbReference>
<dbReference type="CDD" id="cd03294">
    <property type="entry name" value="ABC_Pro_Gly_Betaine"/>
    <property type="match status" value="1"/>
</dbReference>
<dbReference type="FunFam" id="3.40.50.300:FF:000201">
    <property type="entry name" value="Glycine betaine/L-proline ABC transporter ATP-binding protein"/>
    <property type="match status" value="1"/>
</dbReference>
<dbReference type="Gene3D" id="3.10.580.10">
    <property type="entry name" value="CBS-domain"/>
    <property type="match status" value="1"/>
</dbReference>
<dbReference type="Gene3D" id="3.40.50.300">
    <property type="entry name" value="P-loop containing nucleotide triphosphate hydrolases"/>
    <property type="match status" value="1"/>
</dbReference>
<dbReference type="InterPro" id="IPR003593">
    <property type="entry name" value="AAA+_ATPase"/>
</dbReference>
<dbReference type="InterPro" id="IPR051921">
    <property type="entry name" value="ABC_osmolyte_uptake_ATP-bind"/>
</dbReference>
<dbReference type="InterPro" id="IPR003439">
    <property type="entry name" value="ABC_transporter-like_ATP-bd"/>
</dbReference>
<dbReference type="InterPro" id="IPR017871">
    <property type="entry name" value="ABC_transporter-like_CS"/>
</dbReference>
<dbReference type="InterPro" id="IPR000644">
    <property type="entry name" value="CBS_dom"/>
</dbReference>
<dbReference type="InterPro" id="IPR046342">
    <property type="entry name" value="CBS_dom_sf"/>
</dbReference>
<dbReference type="InterPro" id="IPR005892">
    <property type="entry name" value="Gly-betaine_transp_ATP-bd"/>
</dbReference>
<dbReference type="InterPro" id="IPR027417">
    <property type="entry name" value="P-loop_NTPase"/>
</dbReference>
<dbReference type="NCBIfam" id="TIGR01186">
    <property type="entry name" value="proV"/>
    <property type="match status" value="1"/>
</dbReference>
<dbReference type="PANTHER" id="PTHR43869">
    <property type="entry name" value="GLYCINE BETAINE/PROLINE BETAINE TRANSPORT SYSTEM ATP-BINDING PROTEIN PROV"/>
    <property type="match status" value="1"/>
</dbReference>
<dbReference type="PANTHER" id="PTHR43869:SF1">
    <property type="entry name" value="GLYCINE BETAINE_PROLINE BETAINE TRANSPORT SYSTEM ATP-BINDING PROTEIN PROV"/>
    <property type="match status" value="1"/>
</dbReference>
<dbReference type="Pfam" id="PF00005">
    <property type="entry name" value="ABC_tran"/>
    <property type="match status" value="1"/>
</dbReference>
<dbReference type="Pfam" id="PF00571">
    <property type="entry name" value="CBS"/>
    <property type="match status" value="2"/>
</dbReference>
<dbReference type="SMART" id="SM00382">
    <property type="entry name" value="AAA"/>
    <property type="match status" value="1"/>
</dbReference>
<dbReference type="SMART" id="SM00116">
    <property type="entry name" value="CBS"/>
    <property type="match status" value="2"/>
</dbReference>
<dbReference type="SUPFAM" id="SSF54631">
    <property type="entry name" value="CBS-domain pair"/>
    <property type="match status" value="1"/>
</dbReference>
<dbReference type="SUPFAM" id="SSF52540">
    <property type="entry name" value="P-loop containing nucleoside triphosphate hydrolases"/>
    <property type="match status" value="1"/>
</dbReference>
<dbReference type="PROSITE" id="PS00211">
    <property type="entry name" value="ABC_TRANSPORTER_1"/>
    <property type="match status" value="1"/>
</dbReference>
<dbReference type="PROSITE" id="PS50893">
    <property type="entry name" value="ABC_TRANSPORTER_2"/>
    <property type="match status" value="1"/>
</dbReference>
<dbReference type="PROSITE" id="PS51371">
    <property type="entry name" value="CBS"/>
    <property type="match status" value="2"/>
</dbReference>
<protein>
    <recommendedName>
        <fullName>Glycine betaine transport ATP-binding protein OpuAA</fullName>
        <ecNumber>7.6.2.9</ecNumber>
    </recommendedName>
    <alternativeName>
        <fullName>Quaternary-amine-transporting ATPase</fullName>
    </alternativeName>
</protein>
<comment type="function">
    <text evidence="3 4">Involved in a multicomponent binding-protein-dependent transport system for glycine betaine. Probably responsible for energy coupling to the transport system.</text>
</comment>
<comment type="catalytic activity">
    <reaction>
        <text>a quaternary ammonium(out) + ATP + H2O = a quaternary ammonium(in) + ADP + phosphate + H(+)</text>
        <dbReference type="Rhea" id="RHEA:11036"/>
        <dbReference type="ChEBI" id="CHEBI:15377"/>
        <dbReference type="ChEBI" id="CHEBI:15378"/>
        <dbReference type="ChEBI" id="CHEBI:30616"/>
        <dbReference type="ChEBI" id="CHEBI:35267"/>
        <dbReference type="ChEBI" id="CHEBI:43474"/>
        <dbReference type="ChEBI" id="CHEBI:456216"/>
        <dbReference type="EC" id="7.6.2.9"/>
    </reaction>
</comment>
<comment type="subunit">
    <text evidence="3">The complex is composed of two ATP-binding proteins (OpuAA), two transmembrane proteins (OpuAB) and a solute-binding protein (OpuAC).</text>
</comment>
<comment type="similarity">
    <text evidence="5">Belongs to the ABC transporter superfamily.</text>
</comment>
<sequence>MSVDEKPIKIKVEKVSKIFGKQTKKAVQMLANGKTKKEILKATGSTVGVNQADFEVYDGEIFVIMGLSGSGKSTLVRMLNRLIEPTAGNIYIDGDMITNMSKDQLREVRRKKISMVFQKFALFPHRTILENTEYGLELQGVDKQERQQKALESLKLVGLEGFEHQYPDQLSGGMQQRVGLARALTNDPDILLMDEAFSALDPLIRKDMQDELLDLHDNVGKTIIFITHDLDEALRIGDRIVLMKDGNIVQIGTPEEILMNPSNEYVEKFVEDVDLSKVLTAGHIMKRAETVRIDKGPRVALTLMKNLGISSIYAVDKQKKLLGVIYASDAKKAAESDLSLQDILNTEFTTVPENTYLTEIFDVVSDANIPIAVVDEKQRMKGIVVRGALIGALAGNNEYINAEGTNEQTQDPSAQEVK</sequence>
<proteinExistence type="evidence at protein level"/>
<accession>P46920</accession>
<keyword id="KW-0029">Amino-acid transport</keyword>
<keyword id="KW-0067">ATP-binding</keyword>
<keyword id="KW-0129">CBS domain</keyword>
<keyword id="KW-0547">Nucleotide-binding</keyword>
<keyword id="KW-1185">Reference proteome</keyword>
<keyword id="KW-0677">Repeat</keyword>
<keyword id="KW-1278">Translocase</keyword>
<keyword id="KW-0813">Transport</keyword>
<name>OPUAA_BACSU</name>
<feature type="chain" id="PRO_0000092674" description="Glycine betaine transport ATP-binding protein OpuAA">
    <location>
        <begin position="1"/>
        <end position="418"/>
    </location>
</feature>
<feature type="domain" description="ABC transporter" evidence="1">
    <location>
        <begin position="34"/>
        <end position="270"/>
    </location>
</feature>
<feature type="domain" description="CBS 1" evidence="2">
    <location>
        <begin position="284"/>
        <end position="340"/>
    </location>
</feature>
<feature type="domain" description="CBS 2" evidence="2">
    <location>
        <begin position="344"/>
        <end position="403"/>
    </location>
</feature>
<feature type="binding site" evidence="1">
    <location>
        <begin position="66"/>
        <end position="73"/>
    </location>
    <ligand>
        <name>ATP</name>
        <dbReference type="ChEBI" id="CHEBI:30616"/>
    </ligand>
</feature>
<feature type="sequence conflict" description="In Ref. 2; BAA08932." evidence="5" ref="2">
    <original>T</original>
    <variation>A</variation>
    <location>
        <position position="35"/>
    </location>
</feature>